<proteinExistence type="evidence at protein level"/>
<name>DTL_HUMAN</name>
<feature type="chain" id="PRO_0000274867" description="Denticleless protein homolog">
    <location>
        <begin position="1"/>
        <end position="730"/>
    </location>
</feature>
<feature type="repeat" description="WD 1">
    <location>
        <begin position="47"/>
        <end position="89"/>
    </location>
</feature>
<feature type="repeat" description="WD 2">
    <location>
        <begin position="96"/>
        <end position="135"/>
    </location>
</feature>
<feature type="repeat" description="WD 3">
    <location>
        <begin position="138"/>
        <end position="178"/>
    </location>
</feature>
<feature type="repeat" description="WD 4">
    <location>
        <begin position="214"/>
        <end position="253"/>
    </location>
</feature>
<feature type="repeat" description="WD 5">
    <location>
        <begin position="267"/>
        <end position="308"/>
    </location>
</feature>
<feature type="repeat" description="WD 6">
    <location>
        <begin position="313"/>
        <end position="354"/>
    </location>
</feature>
<feature type="repeat" description="WD 7">
    <location>
        <begin position="358"/>
        <end position="398"/>
    </location>
</feature>
<feature type="region of interest" description="Disordered" evidence="2">
    <location>
        <begin position="188"/>
        <end position="210"/>
    </location>
</feature>
<feature type="region of interest" description="Disordered" evidence="2">
    <location>
        <begin position="399"/>
        <end position="443"/>
    </location>
</feature>
<feature type="region of interest" description="Disordered" evidence="2">
    <location>
        <begin position="465"/>
        <end position="498"/>
    </location>
</feature>
<feature type="region of interest" description="Disordered" evidence="2">
    <location>
        <begin position="599"/>
        <end position="631"/>
    </location>
</feature>
<feature type="region of interest" description="Disordered" evidence="2">
    <location>
        <begin position="644"/>
        <end position="703"/>
    </location>
</feature>
<feature type="short sequence motif" description="DDB1-binding motif">
    <location>
        <begin position="168"/>
        <end position="171"/>
    </location>
</feature>
<feature type="short sequence motif" description="Nuclear localization signal" evidence="1">
    <location>
        <begin position="197"/>
        <end position="203"/>
    </location>
</feature>
<feature type="short sequence motif" description="DDB1-binding motif">
    <location>
        <begin position="243"/>
        <end position="246"/>
    </location>
</feature>
<feature type="compositionally biased region" description="Polar residues" evidence="2">
    <location>
        <begin position="188"/>
        <end position="198"/>
    </location>
</feature>
<feature type="compositionally biased region" description="Polar residues" evidence="2">
    <location>
        <begin position="679"/>
        <end position="689"/>
    </location>
</feature>
<feature type="modified residue" description="N-acetylmethionine" evidence="32">
    <location>
        <position position="1"/>
    </location>
</feature>
<feature type="modified residue" description="Phosphothreonine" evidence="33">
    <location>
        <position position="196"/>
    </location>
</feature>
<feature type="modified residue" description="Phosphoserine" evidence="30 33">
    <location>
        <position position="410"/>
    </location>
</feature>
<feature type="modified residue" description="Phosphoserine" evidence="33">
    <location>
        <position position="426"/>
    </location>
</feature>
<feature type="modified residue" description="Phosphothreonine; by CDK1 and CDK2" evidence="18">
    <location>
        <position position="464"/>
    </location>
</feature>
<feature type="modified residue" description="Phosphoserine" evidence="28 33">
    <location>
        <position position="485"/>
    </location>
</feature>
<feature type="modified residue" description="Phosphoserine" evidence="28 30 33">
    <location>
        <position position="490"/>
    </location>
</feature>
<feature type="modified residue" description="Phosphoserine" evidence="28">
    <location>
        <position position="495"/>
    </location>
</feature>
<feature type="modified residue" description="Phosphoserine" evidence="28 29 30 31">
    <location>
        <position position="512"/>
    </location>
</feature>
<feature type="modified residue" description="Phosphothreonine" evidence="28 29 30 31 33">
    <location>
        <position position="516"/>
    </location>
</feature>
<feature type="modified residue" description="Phosphoserine" evidence="28 33">
    <location>
        <position position="557"/>
    </location>
</feature>
<feature type="modified residue" description="Phosphoserine" evidence="28">
    <location>
        <position position="676"/>
    </location>
</feature>
<feature type="modified residue" description="Phosphoserine" evidence="28 33">
    <location>
        <position position="679"/>
    </location>
</feature>
<feature type="modified residue" description="Phosphothreonine" evidence="28">
    <location>
        <position position="684"/>
    </location>
</feature>
<feature type="modified residue" description="Phosphothreonine" evidence="33">
    <location>
        <position position="702"/>
    </location>
</feature>
<feature type="modified residue" description="Phosphoserine" evidence="33">
    <location>
        <position position="717"/>
    </location>
</feature>
<feature type="splice variant" id="VSP_022879" description="In isoform 2." evidence="26">
    <location>
        <begin position="18"/>
        <end position="59"/>
    </location>
</feature>
<feature type="splice variant" id="VSP_022880" description="In isoform 2." evidence="26">
    <original>IKVWDLRKNYTAYR</original>
    <variation>FKSDFGFHWLYFIC</variation>
    <location>
        <begin position="240"/>
        <end position="253"/>
    </location>
</feature>
<feature type="splice variant" id="VSP_022881" description="In isoform 2." evidence="26">
    <location>
        <begin position="254"/>
        <end position="730"/>
    </location>
</feature>
<feature type="sequence variant" id="VAR_062095" description="In dbSNP:rs35137676.">
    <original>S</original>
    <variation>N</variation>
    <location>
        <position position="425"/>
    </location>
</feature>
<feature type="sequence variant" id="VAR_030353" description="In dbSNP:rs3135474." evidence="3 4 5 6 24 25">
    <original>A</original>
    <variation>V</variation>
    <location>
        <position position="436"/>
    </location>
</feature>
<feature type="sequence variant" id="VAR_030354" description="In dbSNP:rs6540718." evidence="3 4 5 6 24 33">
    <original>K</original>
    <variation>T</variation>
    <location>
        <position position="694"/>
    </location>
</feature>
<feature type="mutagenesis site" description="Blocks association with DDB1 and ubiquitination by DCX(DTL). No effect on ubiquitination by SCF(FBXO11)." evidence="7 19">
    <original>R</original>
    <variation>A</variation>
    <location>
        <position position="246"/>
    </location>
</feature>
<feature type="mutagenesis site" description="Increases protein stability, but no effect on interaction with FBXO11 and polyubiquitination. Delays cell migration." evidence="19">
    <original>D</original>
    <variation>A</variation>
    <location>
        <position position="457"/>
    </location>
</feature>
<feature type="mutagenesis site" description="Blocks interaction with FBXO11 and ubiquitination, increasing protein stability. Delays cell migration." evidence="19">
    <original>S</original>
    <variation>A</variation>
    <location>
        <position position="462"/>
    </location>
</feature>
<feature type="mutagenesis site" description="No effect on interaction with FBXO11. Increases protein stability." evidence="18">
    <original>N</original>
    <variation>A</variation>
    <location>
        <position position="463"/>
    </location>
</feature>
<feature type="mutagenesis site" description="Blocks interaction with FBXO11 and increases protein stability. Not phosphorylated by CDK1 or CDK2." evidence="18">
    <original>T</original>
    <variation>A</variation>
    <location>
        <position position="464"/>
    </location>
</feature>
<feature type="mutagenesis site" description="Blocks interaction with FBXO11." evidence="18">
    <original>T</original>
    <variation>D</variation>
    <location>
        <position position="464"/>
    </location>
</feature>
<feature type="mutagenesis site" description="Inhibits phosphorylation on T-464. No effect on interaction with FBXO11." evidence="18">
    <original>P</original>
    <variation>A</variation>
    <location>
        <position position="465"/>
    </location>
</feature>
<feature type="mutagenesis site" description="No effect on interaction with FBXO11." evidence="18">
    <original>T</original>
    <variation>A</variation>
    <location>
        <position position="466"/>
    </location>
</feature>
<feature type="mutagenesis site" description="No effect on interaction with FBXO11." evidence="18">
    <original>T</original>
    <variation>D</variation>
    <location>
        <position position="466"/>
    </location>
</feature>
<feature type="mutagenesis site" description="No effect on interaction with FBXO11." evidence="18">
    <original>F</original>
    <variation>A</variation>
    <location>
        <position position="467"/>
    </location>
</feature>
<feature type="mutagenesis site" description="No effect on interaction with FBXO11." evidence="18">
    <original>S</original>
    <variation>A</variation>
    <location>
        <position position="468"/>
    </location>
</feature>
<feature type="mutagenesis site" description="No effect on interaction with FBXO11." evidence="18">
    <original>S</original>
    <variation>D</variation>
    <location>
        <position position="468"/>
    </location>
</feature>
<feature type="mutagenesis site" description="No effect on interaction with FBXO11." evidence="18">
    <original>T</original>
    <variation>A</variation>
    <location>
        <position position="471"/>
    </location>
</feature>
<feature type="mutagenesis site" description="No effect on interaction with FBXO11." evidence="18">
    <original>T</original>
    <variation>D</variation>
    <location>
        <position position="471"/>
    </location>
</feature>
<feature type="mutagenesis site" description="No effect on interaction with FBXO11." evidence="18">
    <original>S</original>
    <variation>A</variation>
    <location>
        <position position="472"/>
    </location>
</feature>
<feature type="mutagenesis site" description="No effect on interaction with FBXO11." evidence="18">
    <original>S</original>
    <variation>D</variation>
    <location>
        <position position="472"/>
    </location>
</feature>
<feature type="sequence conflict" description="In Ref. 4; BAA91355." evidence="27" ref="4">
    <original>S</original>
    <variation>P</variation>
    <location>
        <position position="83"/>
    </location>
</feature>
<feature type="sequence conflict" description="In Ref. 4; BAF85032." evidence="27" ref="4">
    <original>L</original>
    <variation>F</variation>
    <location>
        <position position="356"/>
    </location>
</feature>
<feature type="sequence conflict" description="In Ref. 4; BAA91552." evidence="27" ref="4">
    <original>I</original>
    <variation>T</variation>
    <location>
        <position position="532"/>
    </location>
</feature>
<feature type="turn" evidence="34">
    <location>
        <begin position="709"/>
        <end position="712"/>
    </location>
</feature>
<dbReference type="EMBL" id="AF345896">
    <property type="protein sequence ID" value="AAK54706.1"/>
    <property type="molecule type" value="mRNA"/>
</dbReference>
<dbReference type="EMBL" id="DQ641253">
    <property type="protein sequence ID" value="ABG23317.1"/>
    <property type="molecule type" value="mRNA"/>
</dbReference>
<dbReference type="EMBL" id="AF195765">
    <property type="protein sequence ID" value="AAF35182.1"/>
    <property type="molecule type" value="mRNA"/>
</dbReference>
<dbReference type="EMBL" id="AK000742">
    <property type="protein sequence ID" value="BAA91355.1"/>
    <property type="molecule type" value="mRNA"/>
</dbReference>
<dbReference type="EMBL" id="AK001206">
    <property type="protein sequence ID" value="BAA91552.1"/>
    <property type="status" value="ALT_INIT"/>
    <property type="molecule type" value="mRNA"/>
</dbReference>
<dbReference type="EMBL" id="AK001261">
    <property type="protein sequence ID" value="BAA91586.1"/>
    <property type="status" value="ALT_INIT"/>
    <property type="molecule type" value="mRNA"/>
</dbReference>
<dbReference type="EMBL" id="AK027651">
    <property type="protein sequence ID" value="BAB55267.1"/>
    <property type="molecule type" value="mRNA"/>
</dbReference>
<dbReference type="EMBL" id="AK292343">
    <property type="protein sequence ID" value="BAF85032.1"/>
    <property type="molecule type" value="mRNA"/>
</dbReference>
<dbReference type="EMBL" id="AC092814">
    <property type="status" value="NOT_ANNOTATED_CDS"/>
    <property type="molecule type" value="Genomic_DNA"/>
</dbReference>
<dbReference type="EMBL" id="AL592297">
    <property type="status" value="NOT_ANNOTATED_CDS"/>
    <property type="molecule type" value="Genomic_DNA"/>
</dbReference>
<dbReference type="EMBL" id="AL606468">
    <property type="status" value="NOT_ANNOTATED_CDS"/>
    <property type="molecule type" value="Genomic_DNA"/>
</dbReference>
<dbReference type="EMBL" id="CH471100">
    <property type="protein sequence ID" value="EAW93395.1"/>
    <property type="molecule type" value="Genomic_DNA"/>
</dbReference>
<dbReference type="EMBL" id="CH471100">
    <property type="protein sequence ID" value="EAW93397.1"/>
    <property type="molecule type" value="Genomic_DNA"/>
</dbReference>
<dbReference type="EMBL" id="BC033540">
    <property type="protein sequence ID" value="AAH33540.1"/>
    <property type="molecule type" value="mRNA"/>
</dbReference>
<dbReference type="EMBL" id="BC033297">
    <property type="protein sequence ID" value="AAH33297.1"/>
    <property type="molecule type" value="mRNA"/>
</dbReference>
<dbReference type="CCDS" id="CCDS1502.1">
    <molecule id="Q9NZJ0-1"/>
</dbReference>
<dbReference type="RefSeq" id="NP_001273158.1">
    <property type="nucleotide sequence ID" value="NM_001286229.1"/>
</dbReference>
<dbReference type="RefSeq" id="NP_057532.4">
    <molecule id="Q9NZJ0-1"/>
    <property type="nucleotide sequence ID" value="NM_016448.4"/>
</dbReference>
<dbReference type="PDB" id="6QC0">
    <property type="method" value="X-ray"/>
    <property type="resolution" value="3.50 A"/>
    <property type="chains" value="B/D/F=704-717"/>
</dbReference>
<dbReference type="PDBsum" id="6QC0"/>
<dbReference type="SMR" id="Q9NZJ0"/>
<dbReference type="BioGRID" id="119582">
    <property type="interactions" value="126"/>
</dbReference>
<dbReference type="ComplexPortal" id="CPX-2777">
    <property type="entry name" value="CRL4-CDT2 E3 ubiquitin ligase complex, CUL4B variant"/>
</dbReference>
<dbReference type="ComplexPortal" id="CPX-2795">
    <property type="entry name" value="CRL4-CDT2 E3 ubiquitin ligase complex, CUL4A variant"/>
</dbReference>
<dbReference type="CORUM" id="Q9NZJ0"/>
<dbReference type="ELM" id="Q9NZJ0"/>
<dbReference type="FunCoup" id="Q9NZJ0">
    <property type="interactions" value="997"/>
</dbReference>
<dbReference type="IntAct" id="Q9NZJ0">
    <property type="interactions" value="45"/>
</dbReference>
<dbReference type="STRING" id="9606.ENSP00000355958"/>
<dbReference type="GlyGen" id="Q9NZJ0">
    <property type="glycosylation" value="4 sites, 1 N-linked glycan (1 site), 1 O-linked glycan (1 site)"/>
</dbReference>
<dbReference type="iPTMnet" id="Q9NZJ0"/>
<dbReference type="PhosphoSitePlus" id="Q9NZJ0"/>
<dbReference type="BioMuta" id="DTL"/>
<dbReference type="DMDM" id="302393825"/>
<dbReference type="jPOST" id="Q9NZJ0"/>
<dbReference type="MassIVE" id="Q9NZJ0"/>
<dbReference type="PaxDb" id="9606-ENSP00000355958"/>
<dbReference type="PeptideAtlas" id="Q9NZJ0"/>
<dbReference type="ProteomicsDB" id="83411">
    <molecule id="Q9NZJ0-1"/>
</dbReference>
<dbReference type="ProteomicsDB" id="83412">
    <molecule id="Q9NZJ0-2"/>
</dbReference>
<dbReference type="Pumba" id="Q9NZJ0"/>
<dbReference type="Antibodypedia" id="34605">
    <property type="antibodies" value="225 antibodies from 30 providers"/>
</dbReference>
<dbReference type="DNASU" id="51514"/>
<dbReference type="Ensembl" id="ENST00000366991.5">
    <molecule id="Q9NZJ0-1"/>
    <property type="protein sequence ID" value="ENSP00000355958.4"/>
    <property type="gene ID" value="ENSG00000143476.18"/>
</dbReference>
<dbReference type="GeneID" id="51514"/>
<dbReference type="KEGG" id="hsa:51514"/>
<dbReference type="MANE-Select" id="ENST00000366991.5">
    <property type="protein sequence ID" value="ENSP00000355958.4"/>
    <property type="RefSeq nucleotide sequence ID" value="NM_016448.4"/>
    <property type="RefSeq protein sequence ID" value="NP_057532.4"/>
</dbReference>
<dbReference type="UCSC" id="uc009xdc.5">
    <molecule id="Q9NZJ0-1"/>
    <property type="organism name" value="human"/>
</dbReference>
<dbReference type="AGR" id="HGNC:30288"/>
<dbReference type="CTD" id="51514"/>
<dbReference type="DisGeNET" id="51514"/>
<dbReference type="GeneCards" id="DTL"/>
<dbReference type="HGNC" id="HGNC:30288">
    <property type="gene designation" value="DTL"/>
</dbReference>
<dbReference type="HPA" id="ENSG00000143476">
    <property type="expression patterns" value="Group enriched (bone marrow, intestine, lymphoid tissue, placenta, testis)"/>
</dbReference>
<dbReference type="MIM" id="610617">
    <property type="type" value="gene"/>
</dbReference>
<dbReference type="neXtProt" id="NX_Q9NZJ0"/>
<dbReference type="OpenTargets" id="ENSG00000143476"/>
<dbReference type="PharmGKB" id="PA142671941"/>
<dbReference type="VEuPathDB" id="HostDB:ENSG00000143476"/>
<dbReference type="eggNOG" id="KOG0321">
    <property type="taxonomic scope" value="Eukaryota"/>
</dbReference>
<dbReference type="GeneTree" id="ENSGT00530000064210"/>
<dbReference type="HOGENOM" id="CLU_023407_0_0_1"/>
<dbReference type="InParanoid" id="Q9NZJ0"/>
<dbReference type="OMA" id="PHSQFEK"/>
<dbReference type="OrthoDB" id="2096344at2759"/>
<dbReference type="PAN-GO" id="Q9NZJ0">
    <property type="GO annotations" value="4 GO annotations based on evolutionary models"/>
</dbReference>
<dbReference type="PhylomeDB" id="Q9NZJ0"/>
<dbReference type="TreeFam" id="TF324483"/>
<dbReference type="PathwayCommons" id="Q9NZJ0"/>
<dbReference type="Reactome" id="R-HSA-110314">
    <property type="pathway name" value="Recognition of DNA damage by PCNA-containing replication complex"/>
</dbReference>
<dbReference type="Reactome" id="R-HSA-8951664">
    <property type="pathway name" value="Neddylation"/>
</dbReference>
<dbReference type="SignaLink" id="Q9NZJ0"/>
<dbReference type="SIGNOR" id="Q9NZJ0"/>
<dbReference type="UniPathway" id="UPA00143"/>
<dbReference type="BioGRID-ORCS" id="51514">
    <property type="hits" value="811 hits in 1169 CRISPR screens"/>
</dbReference>
<dbReference type="CD-CODE" id="8C2F96ED">
    <property type="entry name" value="Centrosome"/>
</dbReference>
<dbReference type="ChiTaRS" id="DTL">
    <property type="organism name" value="human"/>
</dbReference>
<dbReference type="GeneWiki" id="DTL_(gene)"/>
<dbReference type="GenomeRNAi" id="51514"/>
<dbReference type="Pharos" id="Q9NZJ0">
    <property type="development level" value="Tbio"/>
</dbReference>
<dbReference type="PRO" id="PR:Q9NZJ0"/>
<dbReference type="Proteomes" id="UP000005640">
    <property type="component" value="Chromosome 1"/>
</dbReference>
<dbReference type="RNAct" id="Q9NZJ0">
    <property type="molecule type" value="protein"/>
</dbReference>
<dbReference type="Bgee" id="ENSG00000143476">
    <property type="expression patterns" value="Expressed in secondary oocyte and 136 other cell types or tissues"/>
</dbReference>
<dbReference type="ExpressionAtlas" id="Q9NZJ0">
    <property type="expression patterns" value="baseline and differential"/>
</dbReference>
<dbReference type="GO" id="GO:0005813">
    <property type="term" value="C:centrosome"/>
    <property type="evidence" value="ECO:0000314"/>
    <property type="project" value="UniProtKB"/>
</dbReference>
<dbReference type="GO" id="GO:0005694">
    <property type="term" value="C:chromosome"/>
    <property type="evidence" value="ECO:0007669"/>
    <property type="project" value="UniProtKB-SubCell"/>
</dbReference>
<dbReference type="GO" id="GO:0080008">
    <property type="term" value="C:Cul4-RING E3 ubiquitin ligase complex"/>
    <property type="evidence" value="ECO:0000315"/>
    <property type="project" value="UniProtKB"/>
</dbReference>
<dbReference type="GO" id="GO:0031464">
    <property type="term" value="C:Cul4A-RING E3 ubiquitin ligase complex"/>
    <property type="evidence" value="ECO:0000314"/>
    <property type="project" value="UniProtKB"/>
</dbReference>
<dbReference type="GO" id="GO:0031465">
    <property type="term" value="C:Cul4B-RING E3 ubiquitin ligase complex"/>
    <property type="evidence" value="ECO:0000314"/>
    <property type="project" value="UniProtKB"/>
</dbReference>
<dbReference type="GO" id="GO:0005829">
    <property type="term" value="C:cytosol"/>
    <property type="evidence" value="ECO:0000314"/>
    <property type="project" value="HPA"/>
</dbReference>
<dbReference type="GO" id="GO:0031965">
    <property type="term" value="C:nuclear membrane"/>
    <property type="evidence" value="ECO:0007669"/>
    <property type="project" value="UniProtKB-SubCell"/>
</dbReference>
<dbReference type="GO" id="GO:0005730">
    <property type="term" value="C:nucleolus"/>
    <property type="evidence" value="ECO:0000314"/>
    <property type="project" value="HPA"/>
</dbReference>
<dbReference type="GO" id="GO:0005654">
    <property type="term" value="C:nucleoplasm"/>
    <property type="evidence" value="ECO:0000314"/>
    <property type="project" value="HPA"/>
</dbReference>
<dbReference type="GO" id="GO:0005634">
    <property type="term" value="C:nucleus"/>
    <property type="evidence" value="ECO:0000314"/>
    <property type="project" value="UniProtKB"/>
</dbReference>
<dbReference type="GO" id="GO:0030674">
    <property type="term" value="F:protein-macromolecule adaptor activity"/>
    <property type="evidence" value="ECO:0000318"/>
    <property type="project" value="GO_Central"/>
</dbReference>
<dbReference type="GO" id="GO:0006974">
    <property type="term" value="P:DNA damage response"/>
    <property type="evidence" value="ECO:0000314"/>
    <property type="project" value="UniProtKB"/>
</dbReference>
<dbReference type="GO" id="GO:0006260">
    <property type="term" value="P:DNA replication"/>
    <property type="evidence" value="ECO:0007669"/>
    <property type="project" value="UniProtKB-KW"/>
</dbReference>
<dbReference type="GO" id="GO:0007095">
    <property type="term" value="P:mitotic G2 DNA damage checkpoint signaling"/>
    <property type="evidence" value="ECO:0000315"/>
    <property type="project" value="UniProtKB"/>
</dbReference>
<dbReference type="GO" id="GO:0010971">
    <property type="term" value="P:positive regulation of G2/M transition of mitotic cell cycle"/>
    <property type="evidence" value="ECO:0000315"/>
    <property type="project" value="UniProtKB"/>
</dbReference>
<dbReference type="GO" id="GO:0045732">
    <property type="term" value="P:positive regulation of protein catabolic process"/>
    <property type="evidence" value="ECO:0000315"/>
    <property type="project" value="UniProtKB"/>
</dbReference>
<dbReference type="GO" id="GO:0043161">
    <property type="term" value="P:proteasome-mediated ubiquitin-dependent protein catabolic process"/>
    <property type="evidence" value="ECO:0000318"/>
    <property type="project" value="GO_Central"/>
</dbReference>
<dbReference type="GO" id="GO:0006513">
    <property type="term" value="P:protein monoubiquitination"/>
    <property type="evidence" value="ECO:0000314"/>
    <property type="project" value="UniProtKB"/>
</dbReference>
<dbReference type="GO" id="GO:0000209">
    <property type="term" value="P:protein polyubiquitination"/>
    <property type="evidence" value="ECO:0000314"/>
    <property type="project" value="UniProtKB"/>
</dbReference>
<dbReference type="GO" id="GO:0051726">
    <property type="term" value="P:regulation of cell cycle"/>
    <property type="evidence" value="ECO:0000315"/>
    <property type="project" value="UniProtKB"/>
</dbReference>
<dbReference type="GO" id="GO:0009411">
    <property type="term" value="P:response to UV"/>
    <property type="evidence" value="ECO:0000314"/>
    <property type="project" value="UniProtKB"/>
</dbReference>
<dbReference type="GO" id="GO:0048511">
    <property type="term" value="P:rhythmic process"/>
    <property type="evidence" value="ECO:0007669"/>
    <property type="project" value="UniProtKB-KW"/>
</dbReference>
<dbReference type="GO" id="GO:0019985">
    <property type="term" value="P:translesion synthesis"/>
    <property type="evidence" value="ECO:0000314"/>
    <property type="project" value="UniProtKB"/>
</dbReference>
<dbReference type="GO" id="GO:0006511">
    <property type="term" value="P:ubiquitin-dependent protein catabolic process"/>
    <property type="evidence" value="ECO:0000314"/>
    <property type="project" value="UniProtKB"/>
</dbReference>
<dbReference type="CDD" id="cd00200">
    <property type="entry name" value="WD40"/>
    <property type="match status" value="1"/>
</dbReference>
<dbReference type="FunFam" id="2.130.10.10:FF:000447">
    <property type="entry name" value="Denticleless protein homolog B"/>
    <property type="match status" value="1"/>
</dbReference>
<dbReference type="FunFam" id="2.130.10.10:FF:000171">
    <property type="entry name" value="denticleless protein homolog isoform X1"/>
    <property type="match status" value="1"/>
</dbReference>
<dbReference type="Gene3D" id="2.130.10.10">
    <property type="entry name" value="YVTN repeat-like/Quinoprotein amine dehydrogenase"/>
    <property type="match status" value="2"/>
</dbReference>
<dbReference type="InterPro" id="IPR051865">
    <property type="entry name" value="WD-repeat_CDT2_adapter"/>
</dbReference>
<dbReference type="InterPro" id="IPR015943">
    <property type="entry name" value="WD40/YVTN_repeat-like_dom_sf"/>
</dbReference>
<dbReference type="InterPro" id="IPR019775">
    <property type="entry name" value="WD40_repeat_CS"/>
</dbReference>
<dbReference type="InterPro" id="IPR036322">
    <property type="entry name" value="WD40_repeat_dom_sf"/>
</dbReference>
<dbReference type="InterPro" id="IPR001680">
    <property type="entry name" value="WD40_rpt"/>
</dbReference>
<dbReference type="PANTHER" id="PTHR22852:SF0">
    <property type="entry name" value="DENTICLELESS PROTEIN HOMOLOG"/>
    <property type="match status" value="1"/>
</dbReference>
<dbReference type="PANTHER" id="PTHR22852">
    <property type="entry name" value="LETHAL 2 DENTICLELESS PROTEIN RETINOIC ACID-REGULATED NUCLEAR MATRIX-ASSOCIATED PROTEIN"/>
    <property type="match status" value="1"/>
</dbReference>
<dbReference type="Pfam" id="PF00400">
    <property type="entry name" value="WD40"/>
    <property type="match status" value="5"/>
</dbReference>
<dbReference type="SMART" id="SM00320">
    <property type="entry name" value="WD40"/>
    <property type="match status" value="6"/>
</dbReference>
<dbReference type="SUPFAM" id="SSF50978">
    <property type="entry name" value="WD40 repeat-like"/>
    <property type="match status" value="1"/>
</dbReference>
<dbReference type="PROSITE" id="PS00678">
    <property type="entry name" value="WD_REPEATS_1"/>
    <property type="match status" value="2"/>
</dbReference>
<dbReference type="PROSITE" id="PS50082">
    <property type="entry name" value="WD_REPEATS_2"/>
    <property type="match status" value="5"/>
</dbReference>
<dbReference type="PROSITE" id="PS50294">
    <property type="entry name" value="WD_REPEATS_REGION"/>
    <property type="match status" value="1"/>
</dbReference>
<comment type="function">
    <text evidence="6 7 8 10 12 13 14 15 16 18 19 20 22 23">Substrate-specific adapter of a DCX (DDB1-CUL4-X-box) E3 ubiquitin-protein ligase complex required for cell cycle control, DNA damage response and translesion DNA synthesis. The DCX(DTL) complex, also named CRL4(CDT2) complex, mediates the polyubiquitination and subsequent degradation of CDT1, CDKN1A/p21(CIP1), FBH1, KMT5A and SDE2 (PubMed:16861906, PubMed:16949367, PubMed:16964240, PubMed:17085480, PubMed:18703516, PubMed:18794347, PubMed:18794348, PubMed:19332548, PubMed:20129063, PubMed:23478441, PubMed:23478445, PubMed:23677613, PubMed:27906959). CDT1 degradation in response to DNA damage is necessary to ensure proper cell cycle regulation of DNA replication (PubMed:16861906, PubMed:16949367, PubMed:17085480). CDKN1A/p21(CIP1) degradation during S phase or following UV irradiation is essential to control replication licensing (PubMed:18794348, PubMed:19332548). KMT5A degradation is also important for a proper regulation of mechanisms such as TGF-beta signaling, cell cycle progression, DNA repair and cell migration (PubMed:23478445). Most substrates require their interaction with PCNA for their polyubiquitination: substrates interact with PCNA via their PIP-box, and those containing the 'K+4' motif in the PIP box, recruit the DCX(DTL) complex, leading to their degradation. In undamaged proliferating cells, the DCX(DTL) complex also promotes the 'Lys-164' monoubiquitination of PCNA, thereby being involved in PCNA-dependent translesion DNA synthesis (PubMed:20129063, PubMed:23478441, PubMed:23478445, PubMed:23677613). The DDB1-CUL4A-DTL E3 ligase complex regulates the circadian clock function by mediating the ubiquitination and degradation of CRY1 (PubMed:26431207).</text>
</comment>
<comment type="pathway">
    <text>Protein modification; protein ubiquitination.</text>
</comment>
<comment type="subunit">
    <text evidence="6 7 9 10 13 14 17 18 19 22">Component of the DCX(DTL) E3 ubiquitin ligase complex (also called CRL4(CDT2)), at least composed of CUL4 (CUL4A or CUL4B), DDB1, DTL/CDT2 and RBX1 (PubMed:16861906, PubMed:16949367, PubMed:17041588, PubMed:17085480, PubMed:18794347, PubMed:18794348, PubMed:23478441). Interacts with CDKN1A (PubMed:23213251). Interacts with DDB1 (PubMed:16949367, PubMed:23478445). Interacts with FBXO11; SCF(FBXWO11) controls DTL stability but DCX(DTL) does not control FBXO11 stability (PubMed:23478441, PubMed:23478445). Interacts with CRY1 (PubMed:26431207).</text>
</comment>
<comment type="interaction">
    <interactant intactId="EBI-1176075">
        <id>Q9NZJ0</id>
    </interactant>
    <interactant intactId="EBI-350322">
        <id>Q16531</id>
        <label>DDB1</label>
    </interactant>
    <organismsDiffer>false</organismsDiffer>
    <experiments>6</experiments>
</comment>
<comment type="interaction">
    <interactant intactId="EBI-1176075">
        <id>Q9NZJ0</id>
    </interactant>
    <interactant intactId="EBI-12157263">
        <id>P40337-2</id>
        <label>VHL</label>
    </interactant>
    <organismsDiffer>false</organismsDiffer>
    <experiments>3</experiments>
</comment>
<comment type="interaction">
    <interactant intactId="EBI-1176075">
        <id>Q9NZJ0</id>
    </interactant>
    <interactant intactId="EBI-356498">
        <id>P62258</id>
        <label>YWHAE</label>
    </interactant>
    <organismsDiffer>false</organismsDiffer>
    <experiments>4</experiments>
</comment>
<comment type="subcellular location">
    <subcellularLocation>
        <location evidence="22">Nucleus</location>
    </subcellularLocation>
    <subcellularLocation>
        <location>Nucleus membrane</location>
        <topology>Peripheral membrane protein</topology>
        <orientation>Nucleoplasmic side</orientation>
    </subcellularLocation>
    <subcellularLocation>
        <location>Cytoplasm</location>
        <location>Cytoskeleton</location>
        <location>Microtubule organizing center</location>
        <location>Centrosome</location>
    </subcellularLocation>
    <subcellularLocation>
        <location>Chromosome</location>
    </subcellularLocation>
    <text>Nuclear matrix-associated protein. Translocates from the interphase nucleus to the metaphase cytoplasm during mitosis.</text>
</comment>
<comment type="alternative products">
    <event type="alternative splicing"/>
    <isoform>
        <id>Q9NZJ0-1</id>
        <name>1</name>
        <sequence type="displayed"/>
    </isoform>
    <isoform>
        <id>Q9NZJ0-2</id>
        <name>2</name>
        <sequence type="described" ref="VSP_022879 VSP_022880 VSP_022881"/>
    </isoform>
</comment>
<comment type="tissue specificity">
    <text evidence="3 11">Expressed in placenta and testis, very low expression seen in skeletal muscle. Detected in all hematopoietic tissues examined, with highest expression in thymus and bone marrow. A low level detected in the spleen and lymph node, and barely detectable level in the peripheral leukocytes. RA treatment down-regulated the expression in NT2 cell.</text>
</comment>
<comment type="developmental stage">
    <text evidence="3 21">Expressed in all fetal tissues examined, included brain, lung, liver, and kidney. Protein levels peak at G1 and decrease through S-phase.</text>
</comment>
<comment type="induction">
    <text evidence="19">Induced by TGF-beta, the up-regulation is immediate and transient.</text>
</comment>
<comment type="PTM">
    <text evidence="11 18 19">Ubiquitinated by the anaphase promoting complex/cyclosome (APC/C). Autoubiquitinated through 'Lys-48'-polyubiquitin chains in a PCNA-independent reaction, allowing proteasomal turnover. Polyubiquitinated by SCF(FBXO11) when not phosphorylated, leading to its degradation. A tight regulation of the polyubiquitination by SCF(FBXO11) is involved in the control of different processes such as TGF-beta signaling, cell cycle progression and exit.</text>
</comment>
<comment type="PTM">
    <text evidence="18">Phosphorylated at Thr-464 by CDK1/Cyclin-B and CDK2/Cyclin-A but not by CDK2/Cyclin-E, MAPK1 or PLK1. Phosphorylation at Thr-464 inhibits the interaction with FBXO11 and decreases upon cell cycle exit induced by TGF-beta or serum starvation.</text>
</comment>
<comment type="similarity">
    <text evidence="27">Belongs to the WD repeat cdt2 family.</text>
</comment>
<comment type="sequence caution" evidence="27">
    <conflict type="erroneous initiation">
        <sequence resource="EMBL-CDS" id="BAA91552"/>
    </conflict>
    <text>Truncated N-terminus.</text>
</comment>
<comment type="sequence caution" evidence="27">
    <conflict type="erroneous initiation">
        <sequence resource="EMBL-CDS" id="BAA91586"/>
    </conflict>
    <text>Truncated N-terminus.</text>
</comment>
<sequence length="730" mass="79468">MLFNSVLRQPQLGVLRNGWSSQYPLQSLLTGYQCSGNDEHTSYGETGVPVPPFGCTFSSAPNMEHVLAVANEEGFVRLYNTESQSFRKKCFKEWMAHWNAVFDLAWVPGELKLVTAAGDQTAKFWDVKAGELIGTCKGHQCSLKSVAFSKFEKAVFCTGGRDGNIMVWDTRCNKKDGFYRQVNQISGAHNTSDKQTPSKPKKKQNSKGLAPSVDFQQSVTVVLFQDENTLVSAGAVDGIIKVWDLRKNYTAYRQEPIASKSFLYPGSSTRKLGYSSLILDSTGSTLFANCTDDNIYMFNMTGLKTSPVAIFNGHQNSTFYVKSSLSPDDQFLVSGSSDEAAYIWKVSTPWQPPTVLLGHSQEVTSVCWCPSDFTKIATCSDDNTLKIWRLNRGLEEKPGGDKLSTVGWASQKKKESRPGLVTVTSSQSTPAKAPRAKCNPSNSSPSSAACAPSCAGDLPLPSNTPTFSIKTSPAKARSPINRRGSVSSVSPKPPSSFKMSIRNWVTRTPSSSPPITPPASETKIMSPRKALIPVSQKSSQAEACSESRNRVKRRLDSSCLESVKQKCVKSCNCVTELDGQVENLHLDLCCLAGNQEDLSKDSLGPTKSSKIEGAGTSISEPPSPISPYASESCGTLPLPLRPCGEGSEMVGKENSSPENKNWLLAMAAKRKAENPSPRSPSSQTPNSRRQSGKKLPSPVTITPSSMRKICTYFHRKSQEDFCGPEHSTEL</sequence>
<protein>
    <recommendedName>
        <fullName>Denticleless protein homolog</fullName>
    </recommendedName>
    <alternativeName>
        <fullName>DDB1- and CUL4-associated factor 2</fullName>
    </alternativeName>
    <alternativeName>
        <fullName>Lethal(2) denticleless protein homolog</fullName>
    </alternativeName>
    <alternativeName>
        <fullName>Retinoic acid-regulated nuclear matrix-associated protein</fullName>
    </alternativeName>
</protein>
<keyword id="KW-0002">3D-structure</keyword>
<keyword id="KW-0007">Acetylation</keyword>
<keyword id="KW-0025">Alternative splicing</keyword>
<keyword id="KW-0090">Biological rhythms</keyword>
<keyword id="KW-0158">Chromosome</keyword>
<keyword id="KW-0963">Cytoplasm</keyword>
<keyword id="KW-0206">Cytoskeleton</keyword>
<keyword id="KW-0227">DNA damage</keyword>
<keyword id="KW-0235">DNA replication</keyword>
<keyword id="KW-0472">Membrane</keyword>
<keyword id="KW-0539">Nucleus</keyword>
<keyword id="KW-0597">Phosphoprotein</keyword>
<keyword id="KW-1267">Proteomics identification</keyword>
<keyword id="KW-1185">Reference proteome</keyword>
<keyword id="KW-0677">Repeat</keyword>
<keyword id="KW-0832">Ubl conjugation</keyword>
<keyword id="KW-0833">Ubl conjugation pathway</keyword>
<keyword id="KW-0853">WD repeat</keyword>
<gene>
    <name type="primary">DTL</name>
    <name type="synonym">CDT2</name>
    <name type="synonym">CDW1</name>
    <name type="synonym">DCAF2</name>
    <name type="synonym">L2DTL</name>
    <name type="synonym">RAMP</name>
</gene>
<accession>Q9NZJ0</accession>
<accession>A8K8H8</accession>
<accession>D3DT98</accession>
<accession>Q5VT77</accession>
<accession>Q96SN0</accession>
<accession>Q9NW03</accession>
<accession>Q9NW34</accession>
<accession>Q9NWM5</accession>
<evidence type="ECO:0000255" key="1"/>
<evidence type="ECO:0000256" key="2">
    <source>
        <dbReference type="SAM" id="MobiDB-lite"/>
    </source>
</evidence>
<evidence type="ECO:0000269" key="3">
    <source>
    </source>
</evidence>
<evidence type="ECO:0000269" key="4">
    <source>
    </source>
</evidence>
<evidence type="ECO:0000269" key="5">
    <source>
    </source>
</evidence>
<evidence type="ECO:0000269" key="6">
    <source>
    </source>
</evidence>
<evidence type="ECO:0000269" key="7">
    <source>
    </source>
</evidence>
<evidence type="ECO:0000269" key="8">
    <source>
    </source>
</evidence>
<evidence type="ECO:0000269" key="9">
    <source>
    </source>
</evidence>
<evidence type="ECO:0000269" key="10">
    <source>
    </source>
</evidence>
<evidence type="ECO:0000269" key="11">
    <source>
    </source>
</evidence>
<evidence type="ECO:0000269" key="12">
    <source>
    </source>
</evidence>
<evidence type="ECO:0000269" key="13">
    <source>
    </source>
</evidence>
<evidence type="ECO:0000269" key="14">
    <source>
    </source>
</evidence>
<evidence type="ECO:0000269" key="15">
    <source>
    </source>
</evidence>
<evidence type="ECO:0000269" key="16">
    <source>
    </source>
</evidence>
<evidence type="ECO:0000269" key="17">
    <source>
    </source>
</evidence>
<evidence type="ECO:0000269" key="18">
    <source>
    </source>
</evidence>
<evidence type="ECO:0000269" key="19">
    <source>
    </source>
</evidence>
<evidence type="ECO:0000269" key="20">
    <source>
    </source>
</evidence>
<evidence type="ECO:0000269" key="21">
    <source>
    </source>
</evidence>
<evidence type="ECO:0000269" key="22">
    <source>
    </source>
</evidence>
<evidence type="ECO:0000269" key="23">
    <source>
    </source>
</evidence>
<evidence type="ECO:0000269" key="24">
    <source ref="3"/>
</evidence>
<evidence type="ECO:0000269" key="25">
    <source ref="6"/>
</evidence>
<evidence type="ECO:0000303" key="26">
    <source>
    </source>
</evidence>
<evidence type="ECO:0000305" key="27"/>
<evidence type="ECO:0007744" key="28">
    <source>
    </source>
</evidence>
<evidence type="ECO:0007744" key="29">
    <source>
    </source>
</evidence>
<evidence type="ECO:0007744" key="30">
    <source>
    </source>
</evidence>
<evidence type="ECO:0007744" key="31">
    <source>
    </source>
</evidence>
<evidence type="ECO:0007744" key="32">
    <source>
    </source>
</evidence>
<evidence type="ECO:0007744" key="33">
    <source>
    </source>
</evidence>
<evidence type="ECO:0007829" key="34">
    <source>
        <dbReference type="PDB" id="6QC0"/>
    </source>
</evidence>
<organism>
    <name type="scientific">Homo sapiens</name>
    <name type="common">Human</name>
    <dbReference type="NCBI Taxonomy" id="9606"/>
    <lineage>
        <taxon>Eukaryota</taxon>
        <taxon>Metazoa</taxon>
        <taxon>Chordata</taxon>
        <taxon>Craniata</taxon>
        <taxon>Vertebrata</taxon>
        <taxon>Euteleostomi</taxon>
        <taxon>Mammalia</taxon>
        <taxon>Eutheria</taxon>
        <taxon>Euarchontoglires</taxon>
        <taxon>Primates</taxon>
        <taxon>Haplorrhini</taxon>
        <taxon>Catarrhini</taxon>
        <taxon>Hominidae</taxon>
        <taxon>Homo</taxon>
    </lineage>
</organism>
<reference key="1">
    <citation type="journal article" date="2001" name="J. Biol. Chem.">
        <title>Cloning and expression of a novel nuclear matrix-associated protein that is regulated during the retinoic acid-induced neuronal differentiation.</title>
        <authorList>
            <person name="Cheung W.M."/>
            <person name="Chu A.H."/>
            <person name="Chu P.W."/>
            <person name="Ip N.Y."/>
        </authorList>
    </citation>
    <scope>NUCLEOTIDE SEQUENCE [MRNA] (ISOFORM 1)</scope>
    <scope>TISSUE SPECIFICITY</scope>
    <scope>DEVELOPMENTAL STAGE</scope>
    <scope>VARIANTS VAL-436 AND THR-694</scope>
</reference>
<reference key="2">
    <citation type="journal article" date="2006" name="Cell Cycle">
        <title>L2DTL/CDT2 interacts with the CUL4/DDB1 complex and PCNA and regulates CDT1 proteolysis in response to DNA damage.</title>
        <authorList>
            <person name="Higa L.A."/>
            <person name="Banks D."/>
            <person name="Wu M."/>
            <person name="Kobayashi R."/>
            <person name="Sun H."/>
            <person name="Zhang H."/>
        </authorList>
    </citation>
    <scope>NUCLEOTIDE SEQUENCE [MRNA] (ISOFORM 1)</scope>
    <scope>FUNCTION</scope>
    <scope>IDENTIFICATION IN A DCX (DDB1-CUL4-X-BOX) E3 UBIQUITIN-PROTEIN LIGASE COMPLEX</scope>
    <scope>IDENTIFICATION BY MASS SPECTROMETRY</scope>
    <scope>VARIANTS VAL-436 AND THR-694</scope>
</reference>
<reference key="3">
    <citation type="submission" date="1999-10" db="EMBL/GenBank/DDBJ databases">
        <title>Identification of L2DTL, a human WD-40 repeat gene homolog of the Drosophila lethal (2) denticleless heat shock gene [l(2)dtl].</title>
        <authorList>
            <person name="Mueller R."/>
            <person name="Ziegler B.L."/>
        </authorList>
    </citation>
    <scope>NUCLEOTIDE SEQUENCE [MRNA] (ISOFORM 1)</scope>
    <scope>VARIANTS VAL-436 AND THR-694</scope>
</reference>
<reference key="4">
    <citation type="journal article" date="2004" name="Nat. Genet.">
        <title>Complete sequencing and characterization of 21,243 full-length human cDNAs.</title>
        <authorList>
            <person name="Ota T."/>
            <person name="Suzuki Y."/>
            <person name="Nishikawa T."/>
            <person name="Otsuki T."/>
            <person name="Sugiyama T."/>
            <person name="Irie R."/>
            <person name="Wakamatsu A."/>
            <person name="Hayashi K."/>
            <person name="Sato H."/>
            <person name="Nagai K."/>
            <person name="Kimura K."/>
            <person name="Makita H."/>
            <person name="Sekine M."/>
            <person name="Obayashi M."/>
            <person name="Nishi T."/>
            <person name="Shibahara T."/>
            <person name="Tanaka T."/>
            <person name="Ishii S."/>
            <person name="Yamamoto J."/>
            <person name="Saito K."/>
            <person name="Kawai Y."/>
            <person name="Isono Y."/>
            <person name="Nakamura Y."/>
            <person name="Nagahari K."/>
            <person name="Murakami K."/>
            <person name="Yasuda T."/>
            <person name="Iwayanagi T."/>
            <person name="Wagatsuma M."/>
            <person name="Shiratori A."/>
            <person name="Sudo H."/>
            <person name="Hosoiri T."/>
            <person name="Kaku Y."/>
            <person name="Kodaira H."/>
            <person name="Kondo H."/>
            <person name="Sugawara M."/>
            <person name="Takahashi M."/>
            <person name="Kanda K."/>
            <person name="Yokoi T."/>
            <person name="Furuya T."/>
            <person name="Kikkawa E."/>
            <person name="Omura Y."/>
            <person name="Abe K."/>
            <person name="Kamihara K."/>
            <person name="Katsuta N."/>
            <person name="Sato K."/>
            <person name="Tanikawa M."/>
            <person name="Yamazaki M."/>
            <person name="Ninomiya K."/>
            <person name="Ishibashi T."/>
            <person name="Yamashita H."/>
            <person name="Murakawa K."/>
            <person name="Fujimori K."/>
            <person name="Tanai H."/>
            <person name="Kimata M."/>
            <person name="Watanabe M."/>
            <person name="Hiraoka S."/>
            <person name="Chiba Y."/>
            <person name="Ishida S."/>
            <person name="Ono Y."/>
            <person name="Takiguchi S."/>
            <person name="Watanabe S."/>
            <person name="Yosida M."/>
            <person name="Hotuta T."/>
            <person name="Kusano J."/>
            <person name="Kanehori K."/>
            <person name="Takahashi-Fujii A."/>
            <person name="Hara H."/>
            <person name="Tanase T.-O."/>
            <person name="Nomura Y."/>
            <person name="Togiya S."/>
            <person name="Komai F."/>
            <person name="Hara R."/>
            <person name="Takeuchi K."/>
            <person name="Arita M."/>
            <person name="Imose N."/>
            <person name="Musashino K."/>
            <person name="Yuuki H."/>
            <person name="Oshima A."/>
            <person name="Sasaki N."/>
            <person name="Aotsuka S."/>
            <person name="Yoshikawa Y."/>
            <person name="Matsunawa H."/>
            <person name="Ichihara T."/>
            <person name="Shiohata N."/>
            <person name="Sano S."/>
            <person name="Moriya S."/>
            <person name="Momiyama H."/>
            <person name="Satoh N."/>
            <person name="Takami S."/>
            <person name="Terashima Y."/>
            <person name="Suzuki O."/>
            <person name="Nakagawa S."/>
            <person name="Senoh A."/>
            <person name="Mizoguchi H."/>
            <person name="Goto Y."/>
            <person name="Shimizu F."/>
            <person name="Wakebe H."/>
            <person name="Hishigaki H."/>
            <person name="Watanabe T."/>
            <person name="Sugiyama A."/>
            <person name="Takemoto M."/>
            <person name="Kawakami B."/>
            <person name="Yamazaki M."/>
            <person name="Watanabe K."/>
            <person name="Kumagai A."/>
            <person name="Itakura S."/>
            <person name="Fukuzumi Y."/>
            <person name="Fujimori Y."/>
            <person name="Komiyama M."/>
            <person name="Tashiro H."/>
            <person name="Tanigami A."/>
            <person name="Fujiwara T."/>
            <person name="Ono T."/>
            <person name="Yamada K."/>
            <person name="Fujii Y."/>
            <person name="Ozaki K."/>
            <person name="Hirao M."/>
            <person name="Ohmori Y."/>
            <person name="Kawabata A."/>
            <person name="Hikiji T."/>
            <person name="Kobatake N."/>
            <person name="Inagaki H."/>
            <person name="Ikema Y."/>
            <person name="Okamoto S."/>
            <person name="Okitani R."/>
            <person name="Kawakami T."/>
            <person name="Noguchi S."/>
            <person name="Itoh T."/>
            <person name="Shigeta K."/>
            <person name="Senba T."/>
            <person name="Matsumura K."/>
            <person name="Nakajima Y."/>
            <person name="Mizuno T."/>
            <person name="Morinaga M."/>
            <person name="Sasaki M."/>
            <person name="Togashi T."/>
            <person name="Oyama M."/>
            <person name="Hata H."/>
            <person name="Watanabe M."/>
            <person name="Komatsu T."/>
            <person name="Mizushima-Sugano J."/>
            <person name="Satoh T."/>
            <person name="Shirai Y."/>
            <person name="Takahashi Y."/>
            <person name="Nakagawa K."/>
            <person name="Okumura K."/>
            <person name="Nagase T."/>
            <person name="Nomura N."/>
            <person name="Kikuchi H."/>
            <person name="Masuho Y."/>
            <person name="Yamashita R."/>
            <person name="Nakai K."/>
            <person name="Yada T."/>
            <person name="Nakamura Y."/>
            <person name="Ohara O."/>
            <person name="Isogai T."/>
            <person name="Sugano S."/>
        </authorList>
    </citation>
    <scope>NUCLEOTIDE SEQUENCE [LARGE SCALE MRNA] (ISOFORMS 1 AND 2)</scope>
    <scope>VARIANTS VAL-436 AND THR-694</scope>
    <source>
        <tissue>Hepatoma</tissue>
        <tissue>Teratocarcinoma</tissue>
        <tissue>Testis</tissue>
    </source>
</reference>
<reference key="5">
    <citation type="journal article" date="2006" name="Nature">
        <title>The DNA sequence and biological annotation of human chromosome 1.</title>
        <authorList>
            <person name="Gregory S.G."/>
            <person name="Barlow K.F."/>
            <person name="McLay K.E."/>
            <person name="Kaul R."/>
            <person name="Swarbreck D."/>
            <person name="Dunham A."/>
            <person name="Scott C.E."/>
            <person name="Howe K.L."/>
            <person name="Woodfine K."/>
            <person name="Spencer C.C.A."/>
            <person name="Jones M.C."/>
            <person name="Gillson C."/>
            <person name="Searle S."/>
            <person name="Zhou Y."/>
            <person name="Kokocinski F."/>
            <person name="McDonald L."/>
            <person name="Evans R."/>
            <person name="Phillips K."/>
            <person name="Atkinson A."/>
            <person name="Cooper R."/>
            <person name="Jones C."/>
            <person name="Hall R.E."/>
            <person name="Andrews T.D."/>
            <person name="Lloyd C."/>
            <person name="Ainscough R."/>
            <person name="Almeida J.P."/>
            <person name="Ambrose K.D."/>
            <person name="Anderson F."/>
            <person name="Andrew R.W."/>
            <person name="Ashwell R.I.S."/>
            <person name="Aubin K."/>
            <person name="Babbage A.K."/>
            <person name="Bagguley C.L."/>
            <person name="Bailey J."/>
            <person name="Beasley H."/>
            <person name="Bethel G."/>
            <person name="Bird C.P."/>
            <person name="Bray-Allen S."/>
            <person name="Brown J.Y."/>
            <person name="Brown A.J."/>
            <person name="Buckley D."/>
            <person name="Burton J."/>
            <person name="Bye J."/>
            <person name="Carder C."/>
            <person name="Chapman J.C."/>
            <person name="Clark S.Y."/>
            <person name="Clarke G."/>
            <person name="Clee C."/>
            <person name="Cobley V."/>
            <person name="Collier R.E."/>
            <person name="Corby N."/>
            <person name="Coville G.J."/>
            <person name="Davies J."/>
            <person name="Deadman R."/>
            <person name="Dunn M."/>
            <person name="Earthrowl M."/>
            <person name="Ellington A.G."/>
            <person name="Errington H."/>
            <person name="Frankish A."/>
            <person name="Frankland J."/>
            <person name="French L."/>
            <person name="Garner P."/>
            <person name="Garnett J."/>
            <person name="Gay L."/>
            <person name="Ghori M.R.J."/>
            <person name="Gibson R."/>
            <person name="Gilby L.M."/>
            <person name="Gillett W."/>
            <person name="Glithero R.J."/>
            <person name="Grafham D.V."/>
            <person name="Griffiths C."/>
            <person name="Griffiths-Jones S."/>
            <person name="Grocock R."/>
            <person name="Hammond S."/>
            <person name="Harrison E.S.I."/>
            <person name="Hart E."/>
            <person name="Haugen E."/>
            <person name="Heath P.D."/>
            <person name="Holmes S."/>
            <person name="Holt K."/>
            <person name="Howden P.J."/>
            <person name="Hunt A.R."/>
            <person name="Hunt S.E."/>
            <person name="Hunter G."/>
            <person name="Isherwood J."/>
            <person name="James R."/>
            <person name="Johnson C."/>
            <person name="Johnson D."/>
            <person name="Joy A."/>
            <person name="Kay M."/>
            <person name="Kershaw J.K."/>
            <person name="Kibukawa M."/>
            <person name="Kimberley A.M."/>
            <person name="King A."/>
            <person name="Knights A.J."/>
            <person name="Lad H."/>
            <person name="Laird G."/>
            <person name="Lawlor S."/>
            <person name="Leongamornlert D.A."/>
            <person name="Lloyd D.M."/>
            <person name="Loveland J."/>
            <person name="Lovell J."/>
            <person name="Lush M.J."/>
            <person name="Lyne R."/>
            <person name="Martin S."/>
            <person name="Mashreghi-Mohammadi M."/>
            <person name="Matthews L."/>
            <person name="Matthews N.S.W."/>
            <person name="McLaren S."/>
            <person name="Milne S."/>
            <person name="Mistry S."/>
            <person name="Moore M.J.F."/>
            <person name="Nickerson T."/>
            <person name="O'Dell C.N."/>
            <person name="Oliver K."/>
            <person name="Palmeiri A."/>
            <person name="Palmer S.A."/>
            <person name="Parker A."/>
            <person name="Patel D."/>
            <person name="Pearce A.V."/>
            <person name="Peck A.I."/>
            <person name="Pelan S."/>
            <person name="Phelps K."/>
            <person name="Phillimore B.J."/>
            <person name="Plumb R."/>
            <person name="Rajan J."/>
            <person name="Raymond C."/>
            <person name="Rouse G."/>
            <person name="Saenphimmachak C."/>
            <person name="Sehra H.K."/>
            <person name="Sheridan E."/>
            <person name="Shownkeen R."/>
            <person name="Sims S."/>
            <person name="Skuce C.D."/>
            <person name="Smith M."/>
            <person name="Steward C."/>
            <person name="Subramanian S."/>
            <person name="Sycamore N."/>
            <person name="Tracey A."/>
            <person name="Tromans A."/>
            <person name="Van Helmond Z."/>
            <person name="Wall M."/>
            <person name="Wallis J.M."/>
            <person name="White S."/>
            <person name="Whitehead S.L."/>
            <person name="Wilkinson J.E."/>
            <person name="Willey D.L."/>
            <person name="Williams H."/>
            <person name="Wilming L."/>
            <person name="Wray P.W."/>
            <person name="Wu Z."/>
            <person name="Coulson A."/>
            <person name="Vaudin M."/>
            <person name="Sulston J.E."/>
            <person name="Durbin R.M."/>
            <person name="Hubbard T."/>
            <person name="Wooster R."/>
            <person name="Dunham I."/>
            <person name="Carter N.P."/>
            <person name="McVean G."/>
            <person name="Ross M.T."/>
            <person name="Harrow J."/>
            <person name="Olson M.V."/>
            <person name="Beck S."/>
            <person name="Rogers J."/>
            <person name="Bentley D.R."/>
        </authorList>
    </citation>
    <scope>NUCLEOTIDE SEQUENCE [LARGE SCALE GENOMIC DNA]</scope>
</reference>
<reference key="6">
    <citation type="submission" date="2005-09" db="EMBL/GenBank/DDBJ databases">
        <authorList>
            <person name="Mural R.J."/>
            <person name="Istrail S."/>
            <person name="Sutton G.G."/>
            <person name="Florea L."/>
            <person name="Halpern A.L."/>
            <person name="Mobarry C.M."/>
            <person name="Lippert R."/>
            <person name="Walenz B."/>
            <person name="Shatkay H."/>
            <person name="Dew I."/>
            <person name="Miller J.R."/>
            <person name="Flanigan M.J."/>
            <person name="Edwards N.J."/>
            <person name="Bolanos R."/>
            <person name="Fasulo D."/>
            <person name="Halldorsson B.V."/>
            <person name="Hannenhalli S."/>
            <person name="Turner R."/>
            <person name="Yooseph S."/>
            <person name="Lu F."/>
            <person name="Nusskern D.R."/>
            <person name="Shue B.C."/>
            <person name="Zheng X.H."/>
            <person name="Zhong F."/>
            <person name="Delcher A.L."/>
            <person name="Huson D.H."/>
            <person name="Kravitz S.A."/>
            <person name="Mouchard L."/>
            <person name="Reinert K."/>
            <person name="Remington K.A."/>
            <person name="Clark A.G."/>
            <person name="Waterman M.S."/>
            <person name="Eichler E.E."/>
            <person name="Adams M.D."/>
            <person name="Hunkapiller M.W."/>
            <person name="Myers E.W."/>
            <person name="Venter J.C."/>
        </authorList>
    </citation>
    <scope>NUCLEOTIDE SEQUENCE [LARGE SCALE GENOMIC DNA]</scope>
    <scope>VARIANT VAL-436</scope>
</reference>
<reference key="7">
    <citation type="journal article" date="2004" name="Genome Res.">
        <title>The status, quality, and expansion of the NIH full-length cDNA project: the Mammalian Gene Collection (MGC).</title>
        <authorList>
            <consortium name="The MGC Project Team"/>
        </authorList>
    </citation>
    <scope>NUCLEOTIDE SEQUENCE [LARGE SCALE MRNA] (ISOFORM 1)</scope>
    <scope>VARIANTS VAL-436 AND THR-694</scope>
    <source>
        <tissue>Lymph</tissue>
        <tissue>Testis</tissue>
    </source>
</reference>
<reference key="8">
    <citation type="journal article" date="2006" name="Cell Cycle">
        <title>Role of L2DTL, cell cycle-regulated nuclear and centrosome protein, in aggressive hepatocellular carcinoma.</title>
        <authorList>
            <person name="Pan H.W."/>
            <person name="Chou H.Y."/>
            <person name="Liu S.H."/>
            <person name="Peng S.Y."/>
            <person name="Liu C.L."/>
            <person name="Hsu H.C."/>
        </authorList>
    </citation>
    <scope>SUBCELLULAR LOCATION</scope>
    <scope>TISSUE SPECIFICITY</scope>
    <scope>UBIQUITINATION</scope>
</reference>
<reference key="9">
    <citation type="journal article" date="2006" name="Genes Dev.">
        <title>DTL/CDT2 is essential for both CDT1 regulation and the early G2/M checkpoint.</title>
        <authorList>
            <person name="Sansam C.L."/>
            <person name="Shepard J.L."/>
            <person name="Lai K."/>
            <person name="Ianari A."/>
            <person name="Danielian P.S."/>
            <person name="Amsterdam A."/>
            <person name="Hopkins N."/>
            <person name="Lees J.A."/>
        </authorList>
    </citation>
    <scope>FUNCTION</scope>
    <scope>IDENTIFICATION IN A DCX (DDB1-CUL4-X-BOX) E3 UBIQUITIN-PROTEIN LIGASE COMPLEX</scope>
</reference>
<reference key="10">
    <citation type="journal article" date="2006" name="Mol. Cell">
        <title>A family of diverse Cul4-Ddb1-interacting proteins includes Cdt2, which is required for S phase destruction of the replication factor Cdt1.</title>
        <authorList>
            <person name="Jin J."/>
            <person name="Arias E.E."/>
            <person name="Chen J."/>
            <person name="Harper J.W."/>
            <person name="Walter J.C."/>
        </authorList>
    </citation>
    <scope>FUNCTION</scope>
    <scope>INTERACTION WITH DDB1</scope>
    <scope>IDENTIFICATION IN A DCX (DDB1-CUL4-X-BOX) E3 UBIQUITIN-PROTEIN LIGASE COMPLEX</scope>
    <scope>MUTAGENESIS OF ARG-246</scope>
</reference>
<reference key="11">
    <citation type="journal article" date="2006" name="Nat. Cell Biol.">
        <title>CUL4-DDB1 ubiquitin ligase interacts with multiple WD40-repeat proteins and regulates histone methylation.</title>
        <authorList>
            <person name="Higa L.A."/>
            <person name="Wu M."/>
            <person name="Ye T."/>
            <person name="Kobayashi R."/>
            <person name="Sun H."/>
            <person name="Zhang H."/>
        </authorList>
    </citation>
    <scope>IDENTIFICATION IN A DCX (DDB1-CUL4-X-BOX) E3 UBIQUITIN-PROTEIN LIGASE COMPLEX</scope>
</reference>
<reference key="12">
    <citation type="journal article" date="2006" name="Nature">
        <title>Molecular architecture and assembly of the DDB1-CUL4A ubiquitin ligase machinery.</title>
        <authorList>
            <person name="Angers S."/>
            <person name="Li T."/>
            <person name="Yi X."/>
            <person name="MacCoss M.J."/>
            <person name="Moon R.T."/>
            <person name="Zheng N."/>
        </authorList>
    </citation>
    <scope>FUNCTION</scope>
</reference>
<reference key="13">
    <citation type="journal article" date="2008" name="Genes Dev.">
        <title>PCNA-dependent regulation of p21 ubiquitylation and degradation via the CRL4Cdt2 ubiquitin ligase complex.</title>
        <authorList>
            <person name="Abbas T."/>
            <person name="Sivaprasad U."/>
            <person name="Terai K."/>
            <person name="Amador V."/>
            <person name="Pagano M."/>
            <person name="Dutta A."/>
        </authorList>
    </citation>
    <scope>FUNCTION</scope>
    <scope>IDENTIFICATION IN A DCX (DDB1-CUL4-X-BOX) E3 UBIQUITIN-PROTEIN LIGASE COMPLEX</scope>
</reference>
<reference key="14">
    <citation type="journal article" date="2008" name="Genes Dev.">
        <title>The CRL4Cdt2 ubiquitin ligase targets the degradation of p21Cip1 to control replication licensing.</title>
        <authorList>
            <person name="Kim Y."/>
            <person name="Starostina N.G."/>
            <person name="Kipreos E.T."/>
        </authorList>
    </citation>
    <scope>FUNCTION</scope>
    <scope>IDENTIFICATION IN A DCX (DDB1-CUL4-X-BOX) E3 UBIQUITIN-PROTEIN LIGASE COMPLEX</scope>
</reference>
<reference key="15">
    <citation type="journal article" date="2008" name="J. Biol. Chem.">
        <title>CDK inhibitor p21 is degraded by a proliferating cell nuclear antigen-coupled Cul4-DDB1Cdt2 pathway during S phase and after UV irradiation.</title>
        <authorList>
            <person name="Nishitani H."/>
            <person name="Shiomi Y."/>
            <person name="Iida H."/>
            <person name="Michishita M."/>
            <person name="Takami T."/>
            <person name="Tsurimoto T."/>
        </authorList>
    </citation>
    <scope>FUNCTION</scope>
</reference>
<reference key="16">
    <citation type="journal article" date="2008" name="Proc. Natl. Acad. Sci. U.S.A.">
        <title>A quantitative atlas of mitotic phosphorylation.</title>
        <authorList>
            <person name="Dephoure N."/>
            <person name="Zhou C."/>
            <person name="Villen J."/>
            <person name="Beausoleil S.A."/>
            <person name="Bakalarski C.E."/>
            <person name="Elledge S.J."/>
            <person name="Gygi S.P."/>
        </authorList>
    </citation>
    <scope>PHOSPHORYLATION [LARGE SCALE ANALYSIS] AT SER-485; SER-490; SER-495; SER-512; THR-516; SER-557; SER-676; SER-679 AND THR-684</scope>
    <scope>IDENTIFICATION BY MASS SPECTROMETRY [LARGE SCALE ANALYSIS]</scope>
    <source>
        <tissue>Cervix carcinoma</tissue>
    </source>
</reference>
<reference key="17">
    <citation type="journal article" date="2009" name="Anal. Chem.">
        <title>Lys-N and trypsin cover complementary parts of the phosphoproteome in a refined SCX-based approach.</title>
        <authorList>
            <person name="Gauci S."/>
            <person name="Helbig A.O."/>
            <person name="Slijper M."/>
            <person name="Krijgsveld J."/>
            <person name="Heck A.J."/>
            <person name="Mohammed S."/>
        </authorList>
    </citation>
    <scope>IDENTIFICATION BY MASS SPECTROMETRY [LARGE SCALE ANALYSIS]</scope>
</reference>
<reference key="18">
    <citation type="journal article" date="2009" name="J. Biol. Chem.">
        <title>Ionizing radiation induces ATM-independent degradation of p21Cip1 in transformed cells.</title>
        <authorList>
            <person name="Stuart S.A."/>
            <person name="Wang J.Y."/>
        </authorList>
    </citation>
    <scope>FUNCTION</scope>
</reference>
<reference key="19">
    <citation type="journal article" date="2009" name="Sci. Signal.">
        <title>Quantitative phosphoproteomic analysis of T cell receptor signaling reveals system-wide modulation of protein-protein interactions.</title>
        <authorList>
            <person name="Mayya V."/>
            <person name="Lundgren D.H."/>
            <person name="Hwang S.-I."/>
            <person name="Rezaul K."/>
            <person name="Wu L."/>
            <person name="Eng J.K."/>
            <person name="Rodionov V."/>
            <person name="Han D.K."/>
        </authorList>
    </citation>
    <scope>PHOSPHORYLATION [LARGE SCALE ANALYSIS] AT SER-512 AND THR-516</scope>
    <scope>IDENTIFICATION BY MASS SPECTROMETRY [LARGE SCALE ANALYSIS]</scope>
    <source>
        <tissue>Leukemic T-cell</tissue>
    </source>
</reference>
<reference key="20">
    <citation type="journal article" date="2010" name="Mol. Cell">
        <title>CRL4(Cdt2) E3 ubiquitin ligase monoubiquitinates PCNA to promote translesion DNA synthesis.</title>
        <authorList>
            <person name="Terai K."/>
            <person name="Abbas T."/>
            <person name="Jazaeri A.A."/>
            <person name="Dutta A."/>
        </authorList>
    </citation>
    <scope>FUNCTION</scope>
</reference>
<reference key="21">
    <citation type="journal article" date="2010" name="Sci. Signal.">
        <title>Quantitative phosphoproteomics reveals widespread full phosphorylation site occupancy during mitosis.</title>
        <authorList>
            <person name="Olsen J.V."/>
            <person name="Vermeulen M."/>
            <person name="Santamaria A."/>
            <person name="Kumar C."/>
            <person name="Miller M.L."/>
            <person name="Jensen L.J."/>
            <person name="Gnad F."/>
            <person name="Cox J."/>
            <person name="Jensen T.S."/>
            <person name="Nigg E.A."/>
            <person name="Brunak S."/>
            <person name="Mann M."/>
        </authorList>
    </citation>
    <scope>PHOSPHORYLATION [LARGE SCALE ANALYSIS] AT SER-410; SER-490; SER-512 AND THR-516</scope>
    <scope>IDENTIFICATION BY MASS SPECTROMETRY [LARGE SCALE ANALYSIS]</scope>
    <source>
        <tissue>Cervix carcinoma</tissue>
    </source>
</reference>
<reference key="22">
    <citation type="journal article" date="2011" name="BMC Syst. Biol.">
        <title>Initial characterization of the human central proteome.</title>
        <authorList>
            <person name="Burkard T.R."/>
            <person name="Planyavsky M."/>
            <person name="Kaupe I."/>
            <person name="Breitwieser F.P."/>
            <person name="Buerckstuemmer T."/>
            <person name="Bennett K.L."/>
            <person name="Superti-Furga G."/>
            <person name="Colinge J."/>
        </authorList>
    </citation>
    <scope>IDENTIFICATION BY MASS SPECTROMETRY [LARGE SCALE ANALYSIS]</scope>
</reference>
<reference key="23">
    <citation type="journal article" date="2011" name="Sci. Signal.">
        <title>System-wide temporal characterization of the proteome and phosphoproteome of human embryonic stem cell differentiation.</title>
        <authorList>
            <person name="Rigbolt K.T."/>
            <person name="Prokhorova T.A."/>
            <person name="Akimov V."/>
            <person name="Henningsen J."/>
            <person name="Johansen P.T."/>
            <person name="Kratchmarova I."/>
            <person name="Kassem M."/>
            <person name="Mann M."/>
            <person name="Olsen J.V."/>
            <person name="Blagoev B."/>
        </authorList>
    </citation>
    <scope>PHOSPHORYLATION [LARGE SCALE ANALYSIS] AT SER-512 AND THR-516</scope>
    <scope>IDENTIFICATION BY MASS SPECTROMETRY [LARGE SCALE ANALYSIS]</scope>
</reference>
<reference key="24">
    <citation type="journal article" date="2012" name="Mol. Cell. Proteomics">
        <title>Comparative large-scale characterisation of plant vs. mammal proteins reveals similar and idiosyncratic N-alpha acetylation features.</title>
        <authorList>
            <person name="Bienvenut W.V."/>
            <person name="Sumpton D."/>
            <person name="Martinez A."/>
            <person name="Lilla S."/>
            <person name="Espagne C."/>
            <person name="Meinnel T."/>
            <person name="Giglione C."/>
        </authorList>
    </citation>
    <scope>ACETYLATION [LARGE SCALE ANALYSIS] AT MET-1</scope>
    <scope>IDENTIFICATION BY MASS SPECTROMETRY [LARGE SCALE ANALYSIS]</scope>
</reference>
<reference key="25">
    <citation type="journal article" date="2012" name="Proc. Natl. Acad. Sci. U.S.A.">
        <title>N-terminal acetylome analyses and functional insights of the N-terminal acetyltransferase NatB.</title>
        <authorList>
            <person name="Van Damme P."/>
            <person name="Lasa M."/>
            <person name="Polevoda B."/>
            <person name="Gazquez C."/>
            <person name="Elosegui-Artola A."/>
            <person name="Kim D.S."/>
            <person name="De Juan-Pardo E."/>
            <person name="Demeyer K."/>
            <person name="Hole K."/>
            <person name="Larrea E."/>
            <person name="Timmerman E."/>
            <person name="Prieto J."/>
            <person name="Arnesen T."/>
            <person name="Sherman F."/>
            <person name="Gevaert K."/>
            <person name="Aldabe R."/>
        </authorList>
    </citation>
    <scope>IDENTIFICATION BY MASS SPECTROMETRY [LARGE SCALE ANALYSIS]</scope>
</reference>
<reference key="26">
    <citation type="journal article" date="2012" name="Proc. Natl. Acad. Sci. U.S.A.">
        <title>TRIM39 regulates cell cycle progression and DNA damage responses via stabilizing p21.</title>
        <authorList>
            <person name="Zhang L."/>
            <person name="Mei Y."/>
            <person name="Fu N.Y."/>
            <person name="Guan L."/>
            <person name="Xie W."/>
            <person name="Liu H.H."/>
            <person name="Yu C.D."/>
            <person name="Yin Z."/>
            <person name="Yu V.C."/>
            <person name="You H."/>
        </authorList>
    </citation>
    <scope>INTERACTION WITH CDKN1A</scope>
</reference>
<reference key="27">
    <citation type="journal article" date="2013" name="Cell Cycle">
        <title>Regulation of TGF-beta signaling, exit from the cell cycle, and cellular migration through cullin cross-regulation: SCF-FBXO11 turns off CRL4-Cdt2.</title>
        <authorList>
            <person name="Abbas T."/>
            <person name="Keaton M."/>
            <person name="Dutta A."/>
        </authorList>
    </citation>
    <scope>SUBCELLULAR LOCATION</scope>
    <scope>DEVELOPMENTAL STAGE</scope>
</reference>
<reference key="28">
    <citation type="journal article" date="2013" name="J. Proteome Res.">
        <title>Toward a comprehensive characterization of a human cancer cell phosphoproteome.</title>
        <authorList>
            <person name="Zhou H."/>
            <person name="Di Palma S."/>
            <person name="Preisinger C."/>
            <person name="Peng M."/>
            <person name="Polat A.N."/>
            <person name="Heck A.J."/>
            <person name="Mohammed S."/>
        </authorList>
    </citation>
    <scope>PHOSPHORYLATION [LARGE SCALE ANALYSIS] AT THR-196; SER-410; SER-426; SER-485; SER-490; THR-516; SER-557; SER-679; THR-702 AND SER-717</scope>
    <scope>VARIANT [LARGE SCALE ANALYSIS] THR-694</scope>
    <scope>IDENTIFICATION BY MASS SPECTROMETRY [LARGE SCALE ANALYSIS]</scope>
    <source>
        <tissue>Cervix carcinoma</tissue>
        <tissue>Erythroleukemia</tissue>
    </source>
</reference>
<reference key="29">
    <citation type="journal article" date="2013" name="Mol. Cell">
        <title>CRL1-FBXO11 promotes Cdt2 ubiquitylation and degradation and regulates Pr-Set7/Set8-mediated cellular migration.</title>
        <authorList>
            <person name="Abbas T."/>
            <person name="Mueller A.C."/>
            <person name="Shibata E."/>
            <person name="Keaton M."/>
            <person name="Rossi M."/>
            <person name="Dutta A."/>
        </authorList>
    </citation>
    <scope>FUNCTION</scope>
    <scope>INTERACTION WITH DDB1 AND FBXO11</scope>
    <scope>INDUCTION</scope>
    <scope>UBIQUITINATION</scope>
    <scope>MUTAGENESIS OF ARG-246; ASP-457 AND SER-462</scope>
</reference>
<reference key="30">
    <citation type="journal article" date="2013" name="Mol. Cell">
        <title>Regulation of the CRL4(Cdt2) ubiquitin ligase and cell-cycle exit by the SCF(Fbxo11) ubiquitin ligase.</title>
        <authorList>
            <person name="Rossi M."/>
            <person name="Duan S."/>
            <person name="Jeong Y.T."/>
            <person name="Horn M."/>
            <person name="Saraf A."/>
            <person name="Florens L."/>
            <person name="Washburn M.P."/>
            <person name="Antebi A."/>
            <person name="Pagano M."/>
        </authorList>
    </citation>
    <scope>FUNCTION</scope>
    <scope>INTERACTION WITH FBXO11</scope>
    <scope>IDENTIFICATION IN THE DCX(DTL) COMPLEX</scope>
    <scope>UBIQUITINATION</scope>
    <scope>PHOSPHORYLATION AT THR-464 BY CDK1 AND CDK2</scope>
    <scope>MUTAGENESIS OF ASN-463; THR-464; PRO-465; THR-466; PHE-467; SER-468; THR-471 AND SER-472</scope>
</reference>
<reference key="31">
    <citation type="journal article" date="2013" name="Nucleic Acids Res.">
        <title>The helicase FBH1 is tightly regulated by PCNA via CRL4(Cdt2)-mediated proteolysis in human cells.</title>
        <authorList>
            <person name="Bacquin A."/>
            <person name="Pouvelle C."/>
            <person name="Siaud N."/>
            <person name="Perderiset M."/>
            <person name="Salome-Desnoulez S."/>
            <person name="Tellier-Lebegue C."/>
            <person name="Lopez B."/>
            <person name="Charbonnier J.B."/>
            <person name="Kannouche P.L."/>
        </authorList>
    </citation>
    <scope>FUNCTION</scope>
</reference>
<reference key="32">
    <citation type="journal article" date="2015" name="PLoS ONE">
        <title>CUL4-DDB1-CDT2 E3 ligase regulates the molecular clock activity by promoting ubiquitination-dependent degradation of the mammalian CRY1.</title>
        <authorList>
            <person name="Tong X."/>
            <person name="Zhang D."/>
            <person name="Guha A."/>
            <person name="Arthurs B."/>
            <person name="Cazares V."/>
            <person name="Gupta N."/>
            <person name="Yin L."/>
        </authorList>
    </citation>
    <scope>FUNCTION</scope>
    <scope>INTERACTION WITH CRY1</scope>
    <scope>SUBCELLULAR LOCATION</scope>
</reference>
<reference key="33">
    <citation type="journal article" date="2016" name="PLoS Genet.">
        <title>PCNA-dependent cleavage and degradation of SDE2 regulates response to replication stress.</title>
        <authorList>
            <person name="Jo U."/>
            <person name="Cai W."/>
            <person name="Wang J."/>
            <person name="Kwon Y."/>
            <person name="D'Andrea A.D."/>
            <person name="Kim H."/>
        </authorList>
    </citation>
    <scope>FUNCTION</scope>
</reference>